<comment type="function">
    <text evidence="1">Catalyzes the attachment of tyrosine to tRNA(Tyr) in a two-step reaction: tyrosine is first activated by ATP to form Tyr-AMP and then transferred to the acceptor end of tRNA(Tyr).</text>
</comment>
<comment type="catalytic activity">
    <reaction evidence="1">
        <text>tRNA(Tyr) + L-tyrosine + ATP = L-tyrosyl-tRNA(Tyr) + AMP + diphosphate + H(+)</text>
        <dbReference type="Rhea" id="RHEA:10220"/>
        <dbReference type="Rhea" id="RHEA-COMP:9706"/>
        <dbReference type="Rhea" id="RHEA-COMP:9707"/>
        <dbReference type="ChEBI" id="CHEBI:15378"/>
        <dbReference type="ChEBI" id="CHEBI:30616"/>
        <dbReference type="ChEBI" id="CHEBI:33019"/>
        <dbReference type="ChEBI" id="CHEBI:58315"/>
        <dbReference type="ChEBI" id="CHEBI:78442"/>
        <dbReference type="ChEBI" id="CHEBI:78536"/>
        <dbReference type="ChEBI" id="CHEBI:456215"/>
        <dbReference type="EC" id="6.1.1.1"/>
    </reaction>
</comment>
<comment type="subunit">
    <text evidence="1">Homodimer.</text>
</comment>
<comment type="subcellular location">
    <subcellularLocation>
        <location evidence="1">Cytoplasm</location>
    </subcellularLocation>
</comment>
<comment type="similarity">
    <text evidence="1">Belongs to the class-I aminoacyl-tRNA synthetase family. TyrS type 1 subfamily.</text>
</comment>
<sequence>MRDFIKHLKDRGILEDFSHGLDSVESPISAYLGFDPTAASLHIGHWIGICFLRRMASFGITPVALVGSATGMIGDPSGKSIERTLLESNEVAHNSKKLSECLSHYLPGVQIVNNMEWFQGTTVIDFLRDVGKHFRLGTMLGKDTIKQRIQSEEGISYTEFSYILLQSYDFAHLFEKHGIALQCGGSDQWGNITSGIDYIRRKGLGQAYGLTYPLLTNSQGKKIGKTESGTIWLDPTLTSPYELYQYFLRLPDAEVPKIARTLTLLSNEEIFDLDKKFLSDPIAVKKFVTETIVTSIHGEDGLKKAQMVTQSMHPGKVSSISEKDFQDLISMGQGISLDRVQTLGKRWIDLFVGVGFCNSKGEARRLIEQKGLYVNSEPIADEHSVFEERQVCYDQYVLLAQGKKKKLVLHLI</sequence>
<reference key="1">
    <citation type="journal article" date="2003" name="Nucleic Acids Res.">
        <title>Genome sequence of Chlamydophila caviae (Chlamydia psittaci GPIC): examining the role of niche-specific genes in the evolution of the Chlamydiaceae.</title>
        <authorList>
            <person name="Read T.D."/>
            <person name="Myers G.S.A."/>
            <person name="Brunham R.C."/>
            <person name="Nelson W.C."/>
            <person name="Paulsen I.T."/>
            <person name="Heidelberg J.F."/>
            <person name="Holtzapple E.K."/>
            <person name="Khouri H.M."/>
            <person name="Federova N.B."/>
            <person name="Carty H.A."/>
            <person name="Umayam L.A."/>
            <person name="Haft D.H."/>
            <person name="Peterson J.D."/>
            <person name="Beanan M.J."/>
            <person name="White O."/>
            <person name="Salzberg S.L."/>
            <person name="Hsia R.-C."/>
            <person name="McClarty G."/>
            <person name="Rank R.G."/>
            <person name="Bavoil P.M."/>
            <person name="Fraser C.M."/>
        </authorList>
    </citation>
    <scope>NUCLEOTIDE SEQUENCE [LARGE SCALE GENOMIC DNA]</scope>
    <source>
        <strain>ATCC VR-813 / DSM 19441 / 03DC25 / GPIC</strain>
    </source>
</reference>
<feature type="chain" id="PRO_0000234695" description="Tyrosine--tRNA ligase">
    <location>
        <begin position="1"/>
        <end position="412"/>
    </location>
</feature>
<feature type="domain" description="S4 RNA-binding" evidence="1">
    <location>
        <begin position="345"/>
        <end position="412"/>
    </location>
</feature>
<feature type="short sequence motif" description="'HIGH' region">
    <location>
        <begin position="36"/>
        <end position="45"/>
    </location>
</feature>
<feature type="short sequence motif" description="'KMSKS' region">
    <location>
        <begin position="222"/>
        <end position="226"/>
    </location>
</feature>
<feature type="binding site" evidence="1">
    <location>
        <position position="31"/>
    </location>
    <ligand>
        <name>L-tyrosine</name>
        <dbReference type="ChEBI" id="CHEBI:58315"/>
    </ligand>
</feature>
<feature type="binding site" evidence="1">
    <location>
        <position position="162"/>
    </location>
    <ligand>
        <name>L-tyrosine</name>
        <dbReference type="ChEBI" id="CHEBI:58315"/>
    </ligand>
</feature>
<feature type="binding site" evidence="1">
    <location>
        <position position="166"/>
    </location>
    <ligand>
        <name>L-tyrosine</name>
        <dbReference type="ChEBI" id="CHEBI:58315"/>
    </ligand>
</feature>
<feature type="binding site" evidence="1">
    <location>
        <position position="225"/>
    </location>
    <ligand>
        <name>ATP</name>
        <dbReference type="ChEBI" id="CHEBI:30616"/>
    </ligand>
</feature>
<organism>
    <name type="scientific">Chlamydia caviae (strain ATCC VR-813 / DSM 19441 / 03DC25 / GPIC)</name>
    <name type="common">Chlamydophila caviae</name>
    <dbReference type="NCBI Taxonomy" id="227941"/>
    <lineage>
        <taxon>Bacteria</taxon>
        <taxon>Pseudomonadati</taxon>
        <taxon>Chlamydiota</taxon>
        <taxon>Chlamydiia</taxon>
        <taxon>Chlamydiales</taxon>
        <taxon>Chlamydiaceae</taxon>
        <taxon>Chlamydia/Chlamydophila group</taxon>
        <taxon>Chlamydia</taxon>
    </lineage>
</organism>
<protein>
    <recommendedName>
        <fullName evidence="1">Tyrosine--tRNA ligase</fullName>
        <ecNumber evidence="1">6.1.1.1</ecNumber>
    </recommendedName>
    <alternativeName>
        <fullName evidence="1">Tyrosyl-tRNA synthetase</fullName>
        <shortName evidence="1">TyrRS</shortName>
    </alternativeName>
</protein>
<gene>
    <name evidence="1" type="primary">tyrS</name>
    <name type="ordered locus">CCA_00431</name>
</gene>
<accession>Q823H9</accession>
<keyword id="KW-0030">Aminoacyl-tRNA synthetase</keyword>
<keyword id="KW-0067">ATP-binding</keyword>
<keyword id="KW-0963">Cytoplasm</keyword>
<keyword id="KW-0436">Ligase</keyword>
<keyword id="KW-0547">Nucleotide-binding</keyword>
<keyword id="KW-0648">Protein biosynthesis</keyword>
<keyword id="KW-0694">RNA-binding</keyword>
<proteinExistence type="inferred from homology"/>
<dbReference type="EC" id="6.1.1.1" evidence="1"/>
<dbReference type="EMBL" id="AE015925">
    <property type="protein sequence ID" value="AAP05177.1"/>
    <property type="molecule type" value="Genomic_DNA"/>
</dbReference>
<dbReference type="RefSeq" id="WP_011006393.1">
    <property type="nucleotide sequence ID" value="NC_003361.3"/>
</dbReference>
<dbReference type="SMR" id="Q823H9"/>
<dbReference type="STRING" id="227941.CCA_00431"/>
<dbReference type="KEGG" id="cca:CCA_00431"/>
<dbReference type="eggNOG" id="COG0162">
    <property type="taxonomic scope" value="Bacteria"/>
</dbReference>
<dbReference type="HOGENOM" id="CLU_024003_0_0_0"/>
<dbReference type="OrthoDB" id="9804243at2"/>
<dbReference type="Proteomes" id="UP000002193">
    <property type="component" value="Chromosome"/>
</dbReference>
<dbReference type="GO" id="GO:0005829">
    <property type="term" value="C:cytosol"/>
    <property type="evidence" value="ECO:0007669"/>
    <property type="project" value="TreeGrafter"/>
</dbReference>
<dbReference type="GO" id="GO:0005524">
    <property type="term" value="F:ATP binding"/>
    <property type="evidence" value="ECO:0007669"/>
    <property type="project" value="UniProtKB-UniRule"/>
</dbReference>
<dbReference type="GO" id="GO:0003723">
    <property type="term" value="F:RNA binding"/>
    <property type="evidence" value="ECO:0007669"/>
    <property type="project" value="UniProtKB-KW"/>
</dbReference>
<dbReference type="GO" id="GO:0004831">
    <property type="term" value="F:tyrosine-tRNA ligase activity"/>
    <property type="evidence" value="ECO:0007669"/>
    <property type="project" value="UniProtKB-UniRule"/>
</dbReference>
<dbReference type="GO" id="GO:0006437">
    <property type="term" value="P:tyrosyl-tRNA aminoacylation"/>
    <property type="evidence" value="ECO:0007669"/>
    <property type="project" value="UniProtKB-UniRule"/>
</dbReference>
<dbReference type="CDD" id="cd00165">
    <property type="entry name" value="S4"/>
    <property type="match status" value="1"/>
</dbReference>
<dbReference type="CDD" id="cd00805">
    <property type="entry name" value="TyrRS_core"/>
    <property type="match status" value="1"/>
</dbReference>
<dbReference type="FunFam" id="3.40.50.620:FF:000287">
    <property type="entry name" value="Tyrosine--tRNA ligase"/>
    <property type="match status" value="1"/>
</dbReference>
<dbReference type="Gene3D" id="3.40.50.620">
    <property type="entry name" value="HUPs"/>
    <property type="match status" value="1"/>
</dbReference>
<dbReference type="Gene3D" id="3.10.290.10">
    <property type="entry name" value="RNA-binding S4 domain"/>
    <property type="match status" value="1"/>
</dbReference>
<dbReference type="Gene3D" id="1.10.240.10">
    <property type="entry name" value="Tyrosyl-Transfer RNA Synthetase"/>
    <property type="match status" value="1"/>
</dbReference>
<dbReference type="HAMAP" id="MF_02006">
    <property type="entry name" value="Tyr_tRNA_synth_type1"/>
    <property type="match status" value="1"/>
</dbReference>
<dbReference type="InterPro" id="IPR002305">
    <property type="entry name" value="aa-tRNA-synth_Ic"/>
</dbReference>
<dbReference type="InterPro" id="IPR014729">
    <property type="entry name" value="Rossmann-like_a/b/a_fold"/>
</dbReference>
<dbReference type="InterPro" id="IPR002942">
    <property type="entry name" value="S4_RNA-bd"/>
</dbReference>
<dbReference type="InterPro" id="IPR036986">
    <property type="entry name" value="S4_RNA-bd_sf"/>
</dbReference>
<dbReference type="InterPro" id="IPR054608">
    <property type="entry name" value="SYY-like_C"/>
</dbReference>
<dbReference type="InterPro" id="IPR002307">
    <property type="entry name" value="Tyr-tRNA-ligase"/>
</dbReference>
<dbReference type="InterPro" id="IPR024088">
    <property type="entry name" value="Tyr-tRNA-ligase_bac-type"/>
</dbReference>
<dbReference type="InterPro" id="IPR024107">
    <property type="entry name" value="Tyr-tRNA-ligase_bac_1"/>
</dbReference>
<dbReference type="NCBIfam" id="TIGR00234">
    <property type="entry name" value="tyrS"/>
    <property type="match status" value="1"/>
</dbReference>
<dbReference type="PANTHER" id="PTHR11766:SF0">
    <property type="entry name" value="TYROSINE--TRNA LIGASE, MITOCHONDRIAL"/>
    <property type="match status" value="1"/>
</dbReference>
<dbReference type="PANTHER" id="PTHR11766">
    <property type="entry name" value="TYROSYL-TRNA SYNTHETASE"/>
    <property type="match status" value="1"/>
</dbReference>
<dbReference type="Pfam" id="PF22421">
    <property type="entry name" value="SYY_C-terminal"/>
    <property type="match status" value="1"/>
</dbReference>
<dbReference type="Pfam" id="PF00579">
    <property type="entry name" value="tRNA-synt_1b"/>
    <property type="match status" value="1"/>
</dbReference>
<dbReference type="PRINTS" id="PR01040">
    <property type="entry name" value="TRNASYNTHTYR"/>
</dbReference>
<dbReference type="SMART" id="SM00363">
    <property type="entry name" value="S4"/>
    <property type="match status" value="1"/>
</dbReference>
<dbReference type="SUPFAM" id="SSF55174">
    <property type="entry name" value="Alpha-L RNA-binding motif"/>
    <property type="match status" value="1"/>
</dbReference>
<dbReference type="SUPFAM" id="SSF52374">
    <property type="entry name" value="Nucleotidylyl transferase"/>
    <property type="match status" value="1"/>
</dbReference>
<dbReference type="PROSITE" id="PS50889">
    <property type="entry name" value="S4"/>
    <property type="match status" value="1"/>
</dbReference>
<evidence type="ECO:0000255" key="1">
    <source>
        <dbReference type="HAMAP-Rule" id="MF_02006"/>
    </source>
</evidence>
<name>SYY_CHLCV</name>